<evidence type="ECO:0000255" key="1">
    <source>
        <dbReference type="HAMAP-Rule" id="MF_01310"/>
    </source>
</evidence>
<evidence type="ECO:0000305" key="2"/>
<reference key="1">
    <citation type="submission" date="2006-12" db="EMBL/GenBank/DDBJ databases">
        <title>Complete sequence of Shewanella amazonensis SB2B.</title>
        <authorList>
            <consortium name="US DOE Joint Genome Institute"/>
            <person name="Copeland A."/>
            <person name="Lucas S."/>
            <person name="Lapidus A."/>
            <person name="Barry K."/>
            <person name="Detter J.C."/>
            <person name="Glavina del Rio T."/>
            <person name="Hammon N."/>
            <person name="Israni S."/>
            <person name="Dalin E."/>
            <person name="Tice H."/>
            <person name="Pitluck S."/>
            <person name="Munk A.C."/>
            <person name="Brettin T."/>
            <person name="Bruce D."/>
            <person name="Han C."/>
            <person name="Tapia R."/>
            <person name="Gilna P."/>
            <person name="Schmutz J."/>
            <person name="Larimer F."/>
            <person name="Land M."/>
            <person name="Hauser L."/>
            <person name="Kyrpides N."/>
            <person name="Mikhailova N."/>
            <person name="Fredrickson J."/>
            <person name="Richardson P."/>
        </authorList>
    </citation>
    <scope>NUCLEOTIDE SEQUENCE [LARGE SCALE GENOMIC DNA]</scope>
    <source>
        <strain>ATCC BAA-1098 / SB2B</strain>
    </source>
</reference>
<comment type="function">
    <text evidence="1">Located on the platform of the 30S subunit, it bridges several disparate RNA helices of the 16S rRNA. Forms part of the Shine-Dalgarno cleft in the 70S ribosome.</text>
</comment>
<comment type="subunit">
    <text evidence="1">Part of the 30S ribosomal subunit. Interacts with proteins S7 and S18. Binds to IF-3.</text>
</comment>
<comment type="similarity">
    <text evidence="1">Belongs to the universal ribosomal protein uS11 family.</text>
</comment>
<organism>
    <name type="scientific">Shewanella amazonensis (strain ATCC BAA-1098 / SB2B)</name>
    <dbReference type="NCBI Taxonomy" id="326297"/>
    <lineage>
        <taxon>Bacteria</taxon>
        <taxon>Pseudomonadati</taxon>
        <taxon>Pseudomonadota</taxon>
        <taxon>Gammaproteobacteria</taxon>
        <taxon>Alteromonadales</taxon>
        <taxon>Shewanellaceae</taxon>
        <taxon>Shewanella</taxon>
    </lineage>
</organism>
<proteinExistence type="inferred from homology"/>
<protein>
    <recommendedName>
        <fullName evidence="1">Small ribosomal subunit protein uS11</fullName>
    </recommendedName>
    <alternativeName>
        <fullName evidence="2">30S ribosomal protein S11</fullName>
    </alternativeName>
</protein>
<gene>
    <name evidence="1" type="primary">rpsK</name>
    <name type="ordered locus">Sama_0236</name>
</gene>
<keyword id="KW-1185">Reference proteome</keyword>
<keyword id="KW-0687">Ribonucleoprotein</keyword>
<keyword id="KW-0689">Ribosomal protein</keyword>
<keyword id="KW-0694">RNA-binding</keyword>
<keyword id="KW-0699">rRNA-binding</keyword>
<dbReference type="EMBL" id="CP000507">
    <property type="protein sequence ID" value="ABL98447.1"/>
    <property type="molecule type" value="Genomic_DNA"/>
</dbReference>
<dbReference type="RefSeq" id="WP_011758357.1">
    <property type="nucleotide sequence ID" value="NC_008700.1"/>
</dbReference>
<dbReference type="SMR" id="A1S241"/>
<dbReference type="STRING" id="326297.Sama_0236"/>
<dbReference type="KEGG" id="saz:Sama_0236"/>
<dbReference type="eggNOG" id="COG0100">
    <property type="taxonomic scope" value="Bacteria"/>
</dbReference>
<dbReference type="HOGENOM" id="CLU_072439_5_0_6"/>
<dbReference type="OrthoDB" id="9806415at2"/>
<dbReference type="Proteomes" id="UP000009175">
    <property type="component" value="Chromosome"/>
</dbReference>
<dbReference type="GO" id="GO:1990904">
    <property type="term" value="C:ribonucleoprotein complex"/>
    <property type="evidence" value="ECO:0007669"/>
    <property type="project" value="UniProtKB-KW"/>
</dbReference>
<dbReference type="GO" id="GO:0005840">
    <property type="term" value="C:ribosome"/>
    <property type="evidence" value="ECO:0007669"/>
    <property type="project" value="UniProtKB-KW"/>
</dbReference>
<dbReference type="GO" id="GO:0019843">
    <property type="term" value="F:rRNA binding"/>
    <property type="evidence" value="ECO:0007669"/>
    <property type="project" value="UniProtKB-UniRule"/>
</dbReference>
<dbReference type="GO" id="GO:0003735">
    <property type="term" value="F:structural constituent of ribosome"/>
    <property type="evidence" value="ECO:0007669"/>
    <property type="project" value="InterPro"/>
</dbReference>
<dbReference type="GO" id="GO:0006412">
    <property type="term" value="P:translation"/>
    <property type="evidence" value="ECO:0007669"/>
    <property type="project" value="UniProtKB-UniRule"/>
</dbReference>
<dbReference type="FunFam" id="3.30.420.80:FF:000001">
    <property type="entry name" value="30S ribosomal protein S11"/>
    <property type="match status" value="1"/>
</dbReference>
<dbReference type="Gene3D" id="3.30.420.80">
    <property type="entry name" value="Ribosomal protein S11"/>
    <property type="match status" value="1"/>
</dbReference>
<dbReference type="HAMAP" id="MF_01310">
    <property type="entry name" value="Ribosomal_uS11"/>
    <property type="match status" value="1"/>
</dbReference>
<dbReference type="InterPro" id="IPR001971">
    <property type="entry name" value="Ribosomal_uS11"/>
</dbReference>
<dbReference type="InterPro" id="IPR019981">
    <property type="entry name" value="Ribosomal_uS11_bac-type"/>
</dbReference>
<dbReference type="InterPro" id="IPR018102">
    <property type="entry name" value="Ribosomal_uS11_CS"/>
</dbReference>
<dbReference type="InterPro" id="IPR036967">
    <property type="entry name" value="Ribosomal_uS11_sf"/>
</dbReference>
<dbReference type="NCBIfam" id="NF003698">
    <property type="entry name" value="PRK05309.1"/>
    <property type="match status" value="1"/>
</dbReference>
<dbReference type="NCBIfam" id="TIGR03632">
    <property type="entry name" value="uS11_bact"/>
    <property type="match status" value="1"/>
</dbReference>
<dbReference type="PANTHER" id="PTHR11759">
    <property type="entry name" value="40S RIBOSOMAL PROTEIN S14/30S RIBOSOMAL PROTEIN S11"/>
    <property type="match status" value="1"/>
</dbReference>
<dbReference type="Pfam" id="PF00411">
    <property type="entry name" value="Ribosomal_S11"/>
    <property type="match status" value="1"/>
</dbReference>
<dbReference type="PIRSF" id="PIRSF002131">
    <property type="entry name" value="Ribosomal_S11"/>
    <property type="match status" value="1"/>
</dbReference>
<dbReference type="SUPFAM" id="SSF53137">
    <property type="entry name" value="Translational machinery components"/>
    <property type="match status" value="1"/>
</dbReference>
<dbReference type="PROSITE" id="PS00054">
    <property type="entry name" value="RIBOSOMAL_S11"/>
    <property type="match status" value="1"/>
</dbReference>
<sequence length="130" mass="13904">MAKVPSRSPRKRVRKQVADGMAHIHASFNNTIVTITDRQGNALSWATAGGSGFRGSRKSTPFAAQVAAERAGVAAQDYGLKNLEVFVKGPGPGRESAIRALNAVGYKITNITDVTPIPHNGCRPPKKRRV</sequence>
<accession>A1S241</accession>
<name>RS11_SHEAM</name>
<feature type="chain" id="PRO_0000294848" description="Small ribosomal subunit protein uS11">
    <location>
        <begin position="1"/>
        <end position="130"/>
    </location>
</feature>